<name>G3P2_STAAC</name>
<sequence length="341" mass="36979">MSTNIAINGMGRIGRMVLRIALQNKNLNVVAINASYPPETIAHLINYDTTHGKYNLKVEPIENGLQVGDHKIKLVADRNPENLPWKELDIDIAIDATGKFNHGDKAIAHIKAGAKKVLLTGPSKGGHVQMVVKGVNDNQLDIEAFDIFSNASCTTNCIGPVAKVLNNQFGIVNGLMTTVHAITNDQKNIDNPHKDLRRARSCNESIIPTSTGAAKALKEVLPELEGKLHGMALRVPTKNVSLVDLVVDLEKEVTAEEVNQAFENAGLEGIIEVEHQPLVSVDFNTNPNSAIIDAKSTMVMSGNKVKVIAWYDNEWGYSNRVVDVAEQIGALLTSKETVSAS</sequence>
<reference key="1">
    <citation type="journal article" date="2005" name="J. Bacteriol.">
        <title>Insights on evolution of virulence and resistance from the complete genome analysis of an early methicillin-resistant Staphylococcus aureus strain and a biofilm-producing methicillin-resistant Staphylococcus epidermidis strain.</title>
        <authorList>
            <person name="Gill S.R."/>
            <person name="Fouts D.E."/>
            <person name="Archer G.L."/>
            <person name="Mongodin E.F."/>
            <person name="DeBoy R.T."/>
            <person name="Ravel J."/>
            <person name="Paulsen I.T."/>
            <person name="Kolonay J.F."/>
            <person name="Brinkac L.M."/>
            <person name="Beanan M.J."/>
            <person name="Dodson R.J."/>
            <person name="Daugherty S.C."/>
            <person name="Madupu R."/>
            <person name="Angiuoli S.V."/>
            <person name="Durkin A.S."/>
            <person name="Haft D.H."/>
            <person name="Vamathevan J.J."/>
            <person name="Khouri H."/>
            <person name="Utterback T.R."/>
            <person name="Lee C."/>
            <person name="Dimitrov G."/>
            <person name="Jiang L."/>
            <person name="Qin H."/>
            <person name="Weidman J."/>
            <person name="Tran K."/>
            <person name="Kang K.H."/>
            <person name="Hance I.R."/>
            <person name="Nelson K.E."/>
            <person name="Fraser C.M."/>
        </authorList>
    </citation>
    <scope>NUCLEOTIDE SEQUENCE [LARGE SCALE GENOMIC DNA]</scope>
    <source>
        <strain>COL</strain>
    </source>
</reference>
<dbReference type="EC" id="1.2.1.12" evidence="2"/>
<dbReference type="EMBL" id="CP000046">
    <property type="protein sequence ID" value="AAW36838.1"/>
    <property type="molecule type" value="Genomic_DNA"/>
</dbReference>
<dbReference type="SMR" id="Q5HF86"/>
<dbReference type="KEGG" id="sac:SACOL1734"/>
<dbReference type="HOGENOM" id="CLU_030140_0_2_9"/>
<dbReference type="UniPathway" id="UPA00109">
    <property type="reaction ID" value="UER00184"/>
</dbReference>
<dbReference type="Proteomes" id="UP000000530">
    <property type="component" value="Chromosome"/>
</dbReference>
<dbReference type="GO" id="GO:0005737">
    <property type="term" value="C:cytoplasm"/>
    <property type="evidence" value="ECO:0007669"/>
    <property type="project" value="UniProtKB-SubCell"/>
</dbReference>
<dbReference type="GO" id="GO:0004365">
    <property type="term" value="F:glyceraldehyde-3-phosphate dehydrogenase (NAD+) (phosphorylating) activity"/>
    <property type="evidence" value="ECO:0000250"/>
    <property type="project" value="UniProtKB"/>
</dbReference>
<dbReference type="GO" id="GO:0051287">
    <property type="term" value="F:NAD binding"/>
    <property type="evidence" value="ECO:0000250"/>
    <property type="project" value="UniProtKB"/>
</dbReference>
<dbReference type="GO" id="GO:0050661">
    <property type="term" value="F:NADP binding"/>
    <property type="evidence" value="ECO:0007669"/>
    <property type="project" value="InterPro"/>
</dbReference>
<dbReference type="GO" id="GO:0006006">
    <property type="term" value="P:glucose metabolic process"/>
    <property type="evidence" value="ECO:0007669"/>
    <property type="project" value="InterPro"/>
</dbReference>
<dbReference type="GO" id="GO:0006096">
    <property type="term" value="P:glycolytic process"/>
    <property type="evidence" value="ECO:0007669"/>
    <property type="project" value="UniProtKB-UniPathway"/>
</dbReference>
<dbReference type="CDD" id="cd18126">
    <property type="entry name" value="GAPDH_I_C"/>
    <property type="match status" value="1"/>
</dbReference>
<dbReference type="CDD" id="cd05214">
    <property type="entry name" value="GAPDH_I_N"/>
    <property type="match status" value="1"/>
</dbReference>
<dbReference type="FunFam" id="3.30.360.10:FF:000002">
    <property type="entry name" value="Glyceraldehyde-3-phosphate dehydrogenase"/>
    <property type="match status" value="1"/>
</dbReference>
<dbReference type="FunFam" id="3.40.50.720:FF:000001">
    <property type="entry name" value="Glyceraldehyde-3-phosphate dehydrogenase"/>
    <property type="match status" value="1"/>
</dbReference>
<dbReference type="Gene3D" id="3.30.360.10">
    <property type="entry name" value="Dihydrodipicolinate Reductase, domain 2"/>
    <property type="match status" value="1"/>
</dbReference>
<dbReference type="Gene3D" id="3.40.50.720">
    <property type="entry name" value="NAD(P)-binding Rossmann-like Domain"/>
    <property type="match status" value="1"/>
</dbReference>
<dbReference type="InterPro" id="IPR020831">
    <property type="entry name" value="GlycerAld/Erythrose_P_DH"/>
</dbReference>
<dbReference type="InterPro" id="IPR020830">
    <property type="entry name" value="GlycerAld_3-P_DH_AS"/>
</dbReference>
<dbReference type="InterPro" id="IPR020829">
    <property type="entry name" value="GlycerAld_3-P_DH_cat"/>
</dbReference>
<dbReference type="InterPro" id="IPR020828">
    <property type="entry name" value="GlycerAld_3-P_DH_NAD(P)-bd"/>
</dbReference>
<dbReference type="InterPro" id="IPR006424">
    <property type="entry name" value="Glyceraldehyde-3-P_DH_1"/>
</dbReference>
<dbReference type="InterPro" id="IPR036291">
    <property type="entry name" value="NAD(P)-bd_dom_sf"/>
</dbReference>
<dbReference type="NCBIfam" id="TIGR01534">
    <property type="entry name" value="GAPDH-I"/>
    <property type="match status" value="1"/>
</dbReference>
<dbReference type="PANTHER" id="PTHR43148">
    <property type="entry name" value="GLYCERALDEHYDE-3-PHOSPHATE DEHYDROGENASE 2"/>
    <property type="match status" value="1"/>
</dbReference>
<dbReference type="Pfam" id="PF02800">
    <property type="entry name" value="Gp_dh_C"/>
    <property type="match status" value="1"/>
</dbReference>
<dbReference type="Pfam" id="PF00044">
    <property type="entry name" value="Gp_dh_N"/>
    <property type="match status" value="1"/>
</dbReference>
<dbReference type="PIRSF" id="PIRSF000149">
    <property type="entry name" value="GAP_DH"/>
    <property type="match status" value="1"/>
</dbReference>
<dbReference type="PRINTS" id="PR00078">
    <property type="entry name" value="G3PDHDRGNASE"/>
</dbReference>
<dbReference type="SMART" id="SM00846">
    <property type="entry name" value="Gp_dh_N"/>
    <property type="match status" value="1"/>
</dbReference>
<dbReference type="SUPFAM" id="SSF55347">
    <property type="entry name" value="Glyceraldehyde-3-phosphate dehydrogenase-like, C-terminal domain"/>
    <property type="match status" value="1"/>
</dbReference>
<dbReference type="SUPFAM" id="SSF51735">
    <property type="entry name" value="NAD(P)-binding Rossmann-fold domains"/>
    <property type="match status" value="1"/>
</dbReference>
<dbReference type="PROSITE" id="PS00071">
    <property type="entry name" value="GAPDH"/>
    <property type="match status" value="1"/>
</dbReference>
<evidence type="ECO:0000250" key="1">
    <source>
        <dbReference type="UniProtKB" id="P00362"/>
    </source>
</evidence>
<evidence type="ECO:0000250" key="2">
    <source>
        <dbReference type="UniProtKB" id="Q6GIL8"/>
    </source>
</evidence>
<evidence type="ECO:0000305" key="3"/>
<organism>
    <name type="scientific">Staphylococcus aureus (strain COL)</name>
    <dbReference type="NCBI Taxonomy" id="93062"/>
    <lineage>
        <taxon>Bacteria</taxon>
        <taxon>Bacillati</taxon>
        <taxon>Bacillota</taxon>
        <taxon>Bacilli</taxon>
        <taxon>Bacillales</taxon>
        <taxon>Staphylococcaceae</taxon>
        <taxon>Staphylococcus</taxon>
    </lineage>
</organism>
<comment type="function">
    <text evidence="2">Catalyzes the oxidative phosphorylation of glyceraldehyde 3-phosphate (G3P) to 1,3-bisphosphoglycerate (BPG) using the cofactor NAD. The first reaction step involves the formation of a hemiacetal intermediate between G3P and a cysteine residue, and this hemiacetal intermediate is then oxidized to a thioester, with concomitant reduction of NAD to NADH. The reduced NADH is then exchanged with the second NAD, and the thioester is attacked by a nucleophilic inorganic phosphate to produce BPG.</text>
</comment>
<comment type="catalytic activity">
    <reaction evidence="2">
        <text>D-glyceraldehyde 3-phosphate + phosphate + NAD(+) = (2R)-3-phospho-glyceroyl phosphate + NADH + H(+)</text>
        <dbReference type="Rhea" id="RHEA:10300"/>
        <dbReference type="ChEBI" id="CHEBI:15378"/>
        <dbReference type="ChEBI" id="CHEBI:43474"/>
        <dbReference type="ChEBI" id="CHEBI:57540"/>
        <dbReference type="ChEBI" id="CHEBI:57604"/>
        <dbReference type="ChEBI" id="CHEBI:57945"/>
        <dbReference type="ChEBI" id="CHEBI:59776"/>
        <dbReference type="EC" id="1.2.1.12"/>
    </reaction>
</comment>
<comment type="pathway">
    <text evidence="3">Carbohydrate degradation; glycolysis; pyruvate from D-glyceraldehyde 3-phosphate: step 1/5.</text>
</comment>
<comment type="subunit">
    <text evidence="2">Homotetramer.</text>
</comment>
<comment type="subcellular location">
    <subcellularLocation>
        <location evidence="3">Cytoplasm</location>
    </subcellularLocation>
</comment>
<comment type="similarity">
    <text evidence="3">Belongs to the glyceraldehyde-3-phosphate dehydrogenase family.</text>
</comment>
<proteinExistence type="inferred from homology"/>
<protein>
    <recommendedName>
        <fullName evidence="2">Glyceraldehyde-3-phosphate dehydrogenase 2</fullName>
        <shortName evidence="2">GAPDH 2</shortName>
        <ecNumber evidence="2">1.2.1.12</ecNumber>
    </recommendedName>
    <alternativeName>
        <fullName evidence="2">NAD-dependent glyceraldehyde-3-phosphate dehydrogenase</fullName>
    </alternativeName>
</protein>
<feature type="chain" id="PRO_0000145691" description="Glyceraldehyde-3-phosphate dehydrogenase 2">
    <location>
        <begin position="1"/>
        <end position="341"/>
    </location>
</feature>
<feature type="active site" description="Nucleophile" evidence="2">
    <location>
        <position position="153"/>
    </location>
</feature>
<feature type="binding site" evidence="2">
    <location>
        <begin position="12"/>
        <end position="13"/>
    </location>
    <ligand>
        <name>NAD(+)</name>
        <dbReference type="ChEBI" id="CHEBI:57540"/>
    </ligand>
</feature>
<feature type="binding site" evidence="2">
    <location>
        <position position="78"/>
    </location>
    <ligand>
        <name>NAD(+)</name>
        <dbReference type="ChEBI" id="CHEBI:57540"/>
    </ligand>
</feature>
<feature type="binding site" evidence="2">
    <location>
        <position position="120"/>
    </location>
    <ligand>
        <name>NAD(+)</name>
        <dbReference type="ChEBI" id="CHEBI:57540"/>
    </ligand>
</feature>
<feature type="binding site" evidence="2">
    <location>
        <begin position="152"/>
        <end position="154"/>
    </location>
    <ligand>
        <name>D-glyceraldehyde 3-phosphate</name>
        <dbReference type="ChEBI" id="CHEBI:59776"/>
    </ligand>
</feature>
<feature type="binding site" evidence="2">
    <location>
        <position position="183"/>
    </location>
    <ligand>
        <name>D-glyceraldehyde 3-phosphate</name>
        <dbReference type="ChEBI" id="CHEBI:59776"/>
    </ligand>
</feature>
<feature type="binding site" evidence="2">
    <location>
        <position position="184"/>
    </location>
    <ligand>
        <name>NAD(+)</name>
        <dbReference type="ChEBI" id="CHEBI:57540"/>
    </ligand>
</feature>
<feature type="binding site" evidence="1">
    <location>
        <position position="198"/>
    </location>
    <ligand>
        <name>D-glyceraldehyde 3-phosphate</name>
        <dbReference type="ChEBI" id="CHEBI:59776"/>
    </ligand>
</feature>
<feature type="binding site" evidence="2">
    <location>
        <begin position="211"/>
        <end position="212"/>
    </location>
    <ligand>
        <name>D-glyceraldehyde 3-phosphate</name>
        <dbReference type="ChEBI" id="CHEBI:59776"/>
    </ligand>
</feature>
<feature type="binding site" evidence="2">
    <location>
        <position position="234"/>
    </location>
    <ligand>
        <name>D-glyceraldehyde 3-phosphate</name>
        <dbReference type="ChEBI" id="CHEBI:59776"/>
    </ligand>
</feature>
<feature type="binding site" evidence="2">
    <location>
        <position position="313"/>
    </location>
    <ligand>
        <name>NAD(+)</name>
        <dbReference type="ChEBI" id="CHEBI:57540"/>
    </ligand>
</feature>
<feature type="site" description="Activates thiol group during catalysis" evidence="2">
    <location>
        <position position="180"/>
    </location>
</feature>
<keyword id="KW-0963">Cytoplasm</keyword>
<keyword id="KW-0324">Glycolysis</keyword>
<keyword id="KW-0520">NAD</keyword>
<keyword id="KW-0547">Nucleotide-binding</keyword>
<keyword id="KW-0560">Oxidoreductase</keyword>
<accession>Q5HF86</accession>
<gene>
    <name type="primary">gapA2</name>
    <name type="synonym">gapB</name>
    <name type="ordered locus">SACOL1734</name>
</gene>